<organism>
    <name type="scientific">Epstein-Barr virus (strain AG876)</name>
    <name type="common">HHV-4</name>
    <name type="synonym">Human herpesvirus 4</name>
    <dbReference type="NCBI Taxonomy" id="82830"/>
    <lineage>
        <taxon>Viruses</taxon>
        <taxon>Duplodnaviria</taxon>
        <taxon>Heunggongvirae</taxon>
        <taxon>Peploviricota</taxon>
        <taxon>Herviviricetes</taxon>
        <taxon>Herpesvirales</taxon>
        <taxon>Orthoherpesviridae</taxon>
        <taxon>Gammaherpesvirinae</taxon>
        <taxon>Lymphocryptovirus</taxon>
        <taxon>Lymphocryptovirus humangamma4</taxon>
        <taxon>Epstein-Barr virus (strain GD1)</taxon>
    </lineage>
</organism>
<reference key="1">
    <citation type="journal article" date="2006" name="Virology">
        <title>The genome of Epstein-Barr virus type 2 strain AG876.</title>
        <authorList>
            <person name="Dolan A."/>
            <person name="Addison C."/>
            <person name="Gatherer D."/>
            <person name="Davison A.J."/>
            <person name="McGeoch D.J."/>
        </authorList>
    </citation>
    <scope>NUCLEOTIDE SEQUENCE [LARGE SCALE GENOMIC DNA]</scope>
</reference>
<gene>
    <name type="ORF">BMRF1</name>
</gene>
<dbReference type="EMBL" id="DQ279927">
    <property type="protein sequence ID" value="ABB89234.1"/>
    <property type="molecule type" value="Genomic_DNA"/>
</dbReference>
<dbReference type="RefSeq" id="YP_001129454.1">
    <property type="nucleotide sequence ID" value="NC_009334.1"/>
</dbReference>
<dbReference type="RefSeq" id="YP_401657.1">
    <property type="nucleotide sequence ID" value="NC_007605.1"/>
</dbReference>
<dbReference type="SMR" id="P0C6Z0"/>
<dbReference type="DNASU" id="3783718"/>
<dbReference type="GeneID" id="3783718"/>
<dbReference type="KEGG" id="vg:3783718"/>
<dbReference type="KEGG" id="vg:5176169"/>
<dbReference type="Proteomes" id="UP000007639">
    <property type="component" value="Genome"/>
</dbReference>
<dbReference type="GO" id="GO:0042025">
    <property type="term" value="C:host cell nucleus"/>
    <property type="evidence" value="ECO:0007669"/>
    <property type="project" value="UniProtKB-SubCell"/>
</dbReference>
<dbReference type="GO" id="GO:0019033">
    <property type="term" value="C:viral tegument"/>
    <property type="evidence" value="ECO:0007669"/>
    <property type="project" value="UniProtKB-SubCell"/>
</dbReference>
<dbReference type="GO" id="GO:0003677">
    <property type="term" value="F:DNA binding"/>
    <property type="evidence" value="ECO:0007669"/>
    <property type="project" value="UniProtKB-KW"/>
</dbReference>
<dbReference type="GO" id="GO:0039645">
    <property type="term" value="P:symbiont-mediated perturbation of host cell cycle G1/S transition checkpoint"/>
    <property type="evidence" value="ECO:0007669"/>
    <property type="project" value="UniProtKB-KW"/>
</dbReference>
<dbReference type="Gene3D" id="3.70.10.10">
    <property type="match status" value="1"/>
</dbReference>
<dbReference type="InterPro" id="IPR007013">
    <property type="entry name" value="DNA_pol_proc_fac_herpes"/>
</dbReference>
<dbReference type="Pfam" id="PF04929">
    <property type="entry name" value="Herpes_DNAp_acc"/>
    <property type="match status" value="1"/>
</dbReference>
<keyword id="KW-0010">Activator</keyword>
<keyword id="KW-1015">Disulfide bond</keyword>
<keyword id="KW-0238">DNA-binding</keyword>
<keyword id="KW-0244">Early protein</keyword>
<keyword id="KW-1078">G1/S host cell cycle checkpoint dysregulation by virus</keyword>
<keyword id="KW-1048">Host nucleus</keyword>
<keyword id="KW-0945">Host-virus interaction</keyword>
<keyword id="KW-1121">Modulation of host cell cycle by virus</keyword>
<keyword id="KW-0597">Phosphoprotein</keyword>
<keyword id="KW-1185">Reference proteome</keyword>
<keyword id="KW-0804">Transcription</keyword>
<keyword id="KW-0805">Transcription regulation</keyword>
<keyword id="KW-0946">Virion</keyword>
<keyword id="KW-0920">Virion tegument</keyword>
<organismHost>
    <name type="scientific">Homo sapiens</name>
    <name type="common">Human</name>
    <dbReference type="NCBI Taxonomy" id="9606"/>
</organismHost>
<protein>
    <recommendedName>
        <fullName>DNA polymerase processivity factor BMRF1</fullName>
    </recommendedName>
    <alternativeName>
        <fullName>Early Antigen Diffused</fullName>
        <shortName>EA-D</shortName>
    </alternativeName>
    <alternativeName>
        <fullName>Polymerase accessory subunit</fullName>
    </alternativeName>
</protein>
<accession>P0C6Z0</accession>
<accession>Q777F9</accession>
<feature type="chain" id="PRO_0000375930" description="DNA polymerase processivity factor BMRF1">
    <location>
        <begin position="1"/>
        <end position="404"/>
    </location>
</feature>
<feature type="region of interest" description="Homodimerization; DNA binding and DNA polymerase processivity" evidence="2">
    <location>
        <begin position="1"/>
        <end position="300"/>
    </location>
</feature>
<feature type="region of interest" description="Transcriptional activation" evidence="2">
    <location>
        <begin position="301"/>
        <end position="404"/>
    </location>
</feature>
<feature type="region of interest" description="Disordered" evidence="3">
    <location>
        <begin position="302"/>
        <end position="404"/>
    </location>
</feature>
<feature type="compositionally biased region" description="Pro residues" evidence="3">
    <location>
        <begin position="335"/>
        <end position="344"/>
    </location>
</feature>
<feature type="modified residue" description="Phosphoserine" evidence="2">
    <location>
        <position position="337"/>
    </location>
</feature>
<feature type="modified residue" description="Phosphothreonine" evidence="2">
    <location>
        <position position="344"/>
    </location>
</feature>
<feature type="modified residue" description="Phosphoserine" evidence="2">
    <location>
        <position position="349"/>
    </location>
</feature>
<feature type="modified residue" description="Phosphothreonine" evidence="2">
    <location>
        <position position="355"/>
    </location>
</feature>
<feature type="disulfide bond" description="Interchain" evidence="2">
    <location>
        <position position="95"/>
    </location>
</feature>
<feature type="disulfide bond" description="Interchain" evidence="2">
    <location>
        <position position="206"/>
    </location>
</feature>
<sequence length="404" mass="43374">METTQTLRFKTKALAVLSKCYDHAQTHLKGGVLQVNLLSVNYGGPRLAAVANAGTAGLISFEVSPDAVAEWQNHQSPEEAPAAVSFRNLAYGRTCVLGKELFGSAVEQASLQFYKRPQGGSRPEFVKLTMEYDDKVSKSHHTCALMPYMPPASDRLRNEQMIGQVLLMPKTASSLQKWARQQGSGGVKVTLNPDLYVTTYTSGEACLTLDYKPLSVGPYEAFTGPVAKAQDVGAVEAHVVCSVAADSLAAALSLCRIPAVSVPILRFYRSGIIAVVAGLLTSAGDLPLDLSVILFNHASEEAAASTASEPEDKSPRVQPLGTGLQQRPRHTVSPSPSPPPPPRTPTWESPARPETPSPAIPSHSSNTALERPLAVQLARKRTSSEARQKQKHPKKVKQAFNPLI</sequence>
<proteinExistence type="inferred from homology"/>
<name>EAD_EBVA8</name>
<comment type="function">
    <text evidence="2">Acts as a DNA polymerase processivity factor; a transcriptional activator for several EBV promoters and inhibits the host DNA damage response (DDR) to double-stranded DNA breaks. Plays an essential role in the viral lytic DNA replication by acting as a polymerase accessory subunit. Stimulates the viral DNA polymerase activity and appears to function with it as a holoenzyme. Increases the processivity of the viral polymerase, probably by acting as a sliding clamp that prevents dissociation of the polymerase from the active template. In addition, BMRF1 transcriptionally activates the oriLyt early BHLF1 promoter. Promotes G1/S cell cycle arrest through p53 induction.</text>
</comment>
<comment type="subunit">
    <text evidence="2">Homodimer. Two dimers can adopt a tetrameric ring-like structure. Forms a complex with the DNA-binding protein BALF2, the DNA polymerase subunit BALF5, and the alkaline exonuclease BGLF5. Interacts (via N-terminus) with BZLF1 (via bZIP domain); this interaction may inhibit BZLF1-induced transcription of the BMRF1 promoter. Interacts (via C-terminus) with host NuRD complex; this interaction is important for transcriptional activation of EBV promoters and inhibition of the ubiquitination step of DDR signaling.</text>
</comment>
<comment type="subcellular location">
    <subcellularLocation>
        <location>Virion tegument</location>
    </subcellularLocation>
    <subcellularLocation>
        <location>Host nucleus</location>
    </subcellularLocation>
    <text evidence="1">BMRF1 shows homogeneous, not dot-like, distribution in the replication compartments, which coincides with the newly synthesized viral DNA.</text>
</comment>
<comment type="domain">
    <text evidence="2">The N-terminus is important for dimerization, DNA binding, and DNA polymerase processivity. The C-terminus mediates transcriptional activation.</text>
</comment>
<comment type="PTM">
    <text evidence="2">Phosphorylated by the viral BGLF4 kinase.</text>
</comment>
<comment type="similarity">
    <text evidence="4">Belongs to the herpesviridae DNA polymerase accessory subunit family.</text>
</comment>
<evidence type="ECO:0000250" key="1"/>
<evidence type="ECO:0000250" key="2">
    <source>
        <dbReference type="UniProtKB" id="P03191"/>
    </source>
</evidence>
<evidence type="ECO:0000256" key="3">
    <source>
        <dbReference type="SAM" id="MobiDB-lite"/>
    </source>
</evidence>
<evidence type="ECO:0000305" key="4"/>